<comment type="catalytic activity">
    <reaction>
        <text>2,3-dihydroxybenzoate + H(+) = catechol + CO2</text>
        <dbReference type="Rhea" id="RHEA:21492"/>
        <dbReference type="ChEBI" id="CHEBI:15378"/>
        <dbReference type="ChEBI" id="CHEBI:16526"/>
        <dbReference type="ChEBI" id="CHEBI:18135"/>
        <dbReference type="ChEBI" id="CHEBI:36654"/>
        <dbReference type="EC" id="4.1.1.46"/>
    </reaction>
</comment>
<comment type="pathway">
    <text>Aromatic compound metabolism; benzoate degradation via hydroxylation.</text>
</comment>
<comment type="subunit">
    <text>Homotetramer.</text>
</comment>
<comment type="miscellaneous">
    <text>The MW of the complete protein is about 38 kDa (345 residues).</text>
</comment>
<comment type="similarity">
    <text evidence="1">Belongs to the metallo-dependent hydrolases superfamily.</text>
</comment>
<dbReference type="EC" id="4.1.1.46"/>
<dbReference type="PIR" id="S65362">
    <property type="entry name" value="S65362"/>
</dbReference>
<dbReference type="VEuPathDB" id="FungiDB:An07g02050"/>
<dbReference type="VEuPathDB" id="FungiDB:ASPNIDRAFT2_1157716"/>
<dbReference type="VEuPathDB" id="FungiDB:ATCC64974_44650"/>
<dbReference type="VEuPathDB" id="FungiDB:M747DRAFT_265980"/>
<dbReference type="UniPathway" id="UPA00156"/>
<dbReference type="GO" id="GO:0050150">
    <property type="term" value="F:o-pyrocatechuate decarboxylase activity"/>
    <property type="evidence" value="ECO:0007669"/>
    <property type="project" value="UniProtKB-EC"/>
</dbReference>
<dbReference type="GO" id="GO:0043640">
    <property type="term" value="P:benzoate catabolic process via hydroxylation"/>
    <property type="evidence" value="ECO:0007669"/>
    <property type="project" value="UniProtKB-UniPathway"/>
</dbReference>
<dbReference type="Gene3D" id="3.20.20.140">
    <property type="entry name" value="Metal-dependent hydrolases"/>
    <property type="match status" value="1"/>
</dbReference>
<dbReference type="InterPro" id="IPR032466">
    <property type="entry name" value="Metal_Hydrolase"/>
</dbReference>
<dbReference type="SUPFAM" id="SSF51556">
    <property type="entry name" value="Metallo-dependent hydrolases"/>
    <property type="match status" value="1"/>
</dbReference>
<name>DBD23_ASPNG</name>
<evidence type="ECO:0000305" key="1"/>
<proteinExistence type="evidence at protein level"/>
<sequence>MLGKIALEEAFALPRFEEKTRWWASLFSVDPEIEHADKYGVGYQILSYTAPGVQDIWDPVEAQAGEVGVDRILSIDYPFETFEDAAVVLRRDVQTYGFIGALVNDTQRTGPMGNNQEEAYNINDYIAEQIRDKPDRFGAFTLSMHNPQEAGRDNAARLFERNPTGTIYEKLGAFRDYDAKVKAEITDINKLRIENASWDIFWQTDTEAQALAVEDADVWFDGAEFYDNAAMQYVIAYGAKQADIYGPINHWFEDRLLGLAETCKWLVGPDLSFAHGVSLHVLGMTVNGVFDR</sequence>
<reference key="1">
    <citation type="journal article" date="1995" name="Eur. J. Biochem.">
        <title>2,3-dihydroxybenzoic acid decarboxylase from Aspergillus niger. A novel decarboxylase.</title>
        <authorList>
            <person name="Santha R."/>
            <person name="Savithri H.S."/>
            <person name="Rao N.A."/>
            <person name="Vaidyanathan C.S."/>
        </authorList>
    </citation>
    <scope>PROTEIN SEQUENCE</scope>
</reference>
<feature type="chain" id="PRO_0000079886" description="2,3-dihydroxybenzoate decarboxylase">
    <location>
        <begin position="1"/>
        <end position="292" status="greater than"/>
    </location>
</feature>
<feature type="active site">
    <location>
        <position position="263"/>
    </location>
</feature>
<feature type="unsure residue" description="P or G">
    <location>
        <position position="247"/>
    </location>
</feature>
<feature type="unsure residue" description="H or G">
    <location>
        <position position="250"/>
    </location>
</feature>
<feature type="non-consecutive residues" evidence="1">
    <location>
        <begin position="32"/>
        <end position="33"/>
    </location>
</feature>
<feature type="non-consecutive residues" evidence="1">
    <location>
        <begin position="66"/>
        <end position="67"/>
    </location>
</feature>
<feature type="non-consecutive residues" evidence="1">
    <location>
        <begin position="88"/>
        <end position="89"/>
    </location>
</feature>
<feature type="non-consecutive residues" evidence="1">
    <location>
        <begin position="121"/>
        <end position="122"/>
    </location>
</feature>
<feature type="non-consecutive residues" evidence="1">
    <location>
        <begin position="150"/>
        <end position="151"/>
    </location>
</feature>
<feature type="non-consecutive residues" evidence="1">
    <location>
        <begin position="160"/>
        <end position="161"/>
    </location>
</feature>
<feature type="non-consecutive residues" evidence="1">
    <location>
        <begin position="170"/>
        <end position="171"/>
    </location>
</feature>
<feature type="non-consecutive residues" evidence="1">
    <location>
        <begin position="183"/>
        <end position="184"/>
    </location>
</feature>
<feature type="non-consecutive residues" evidence="1">
    <location>
        <begin position="194"/>
        <end position="195"/>
    </location>
</feature>
<feature type="non-consecutive residues" evidence="1">
    <location>
        <begin position="207"/>
        <end position="208"/>
    </location>
</feature>
<feature type="non-consecutive residues" evidence="1">
    <location>
        <begin position="214"/>
        <end position="215"/>
    </location>
</feature>
<feature type="non-consecutive residues" evidence="1">
    <location>
        <begin position="224"/>
        <end position="225"/>
    </location>
</feature>
<feature type="non-consecutive residues" evidence="1">
    <location>
        <begin position="229"/>
        <end position="230"/>
    </location>
</feature>
<feature type="non-consecutive residues" evidence="1">
    <location>
        <begin position="236"/>
        <end position="237"/>
    </location>
</feature>
<feature type="non-consecutive residues" evidence="1">
    <location>
        <begin position="240"/>
        <end position="241"/>
    </location>
</feature>
<feature type="non-consecutive residues" evidence="1">
    <location>
        <begin position="247"/>
        <end position="248"/>
    </location>
</feature>
<feature type="non-consecutive residues" evidence="1">
    <location>
        <begin position="255"/>
        <end position="256"/>
    </location>
</feature>
<feature type="non-consecutive residues" evidence="1">
    <location>
        <begin position="264"/>
        <end position="265"/>
    </location>
</feature>
<feature type="non-terminal residue">
    <location>
        <position position="292"/>
    </location>
</feature>
<protein>
    <recommendedName>
        <fullName>2,3-dihydroxybenzoate decarboxylase</fullName>
        <shortName>2,3-DHBA decarboxylase</shortName>
        <shortName>DHBD</shortName>
        <ecNumber>4.1.1.46</ecNumber>
    </recommendedName>
    <alternativeName>
        <fullName>o-pyrocatechuate decarboxylase</fullName>
    </alternativeName>
</protein>
<keyword id="KW-0210">Decarboxylase</keyword>
<keyword id="KW-0903">Direct protein sequencing</keyword>
<keyword id="KW-0456">Lyase</keyword>
<organism>
    <name type="scientific">Aspergillus niger</name>
    <dbReference type="NCBI Taxonomy" id="5061"/>
    <lineage>
        <taxon>Eukaryota</taxon>
        <taxon>Fungi</taxon>
        <taxon>Dikarya</taxon>
        <taxon>Ascomycota</taxon>
        <taxon>Pezizomycotina</taxon>
        <taxon>Eurotiomycetes</taxon>
        <taxon>Eurotiomycetidae</taxon>
        <taxon>Eurotiales</taxon>
        <taxon>Aspergillaceae</taxon>
        <taxon>Aspergillus</taxon>
        <taxon>Aspergillus subgen. Circumdati</taxon>
    </lineage>
</organism>
<accession>P80346</accession>